<reference key="1">
    <citation type="journal article" date="1989" name="Biol. Chem. Hoppe-Seyler">
        <title>Purification and N-terminal amino-acid sequences of bacterial malate dehydrogenases from six actinomycetales strains and from Phenylobacterium immobile, strain E.</title>
        <authorList>
            <person name="Rommel T.O."/>
            <person name="Hund H.-K."/>
            <person name="Speth A.R."/>
            <person name="Lingens F."/>
        </authorList>
    </citation>
    <scope>PROTEIN SEQUENCE</scope>
</reference>
<keyword id="KW-0903">Direct protein sequencing</keyword>
<keyword id="KW-0520">NAD</keyword>
<keyword id="KW-0560">Oxidoreductase</keyword>
<keyword id="KW-0816">Tricarboxylic acid cycle</keyword>
<comment type="function">
    <text evidence="1">Catalyzes the reversible oxidation of malate to oxaloacetate.</text>
</comment>
<comment type="catalytic activity">
    <reaction evidence="2">
        <text>(S)-malate + NAD(+) = oxaloacetate + NADH + H(+)</text>
        <dbReference type="Rhea" id="RHEA:21432"/>
        <dbReference type="ChEBI" id="CHEBI:15378"/>
        <dbReference type="ChEBI" id="CHEBI:15589"/>
        <dbReference type="ChEBI" id="CHEBI:16452"/>
        <dbReference type="ChEBI" id="CHEBI:57540"/>
        <dbReference type="ChEBI" id="CHEBI:57945"/>
        <dbReference type="EC" id="1.1.1.37"/>
    </reaction>
</comment>
<comment type="similarity">
    <text evidence="3">Belongs to the LDH/MDH superfamily. MDH type 2 family.</text>
</comment>
<dbReference type="EC" id="1.1.1.37"/>
<dbReference type="PIR" id="S04957">
    <property type="entry name" value="S04957"/>
</dbReference>
<dbReference type="GO" id="GO:0030060">
    <property type="term" value="F:L-malate dehydrogenase (NAD+) activity"/>
    <property type="evidence" value="ECO:0007669"/>
    <property type="project" value="UniProtKB-EC"/>
</dbReference>
<dbReference type="GO" id="GO:0006099">
    <property type="term" value="P:tricarboxylic acid cycle"/>
    <property type="evidence" value="ECO:0007669"/>
    <property type="project" value="UniProtKB-KW"/>
</dbReference>
<dbReference type="Gene3D" id="3.40.50.720">
    <property type="entry name" value="NAD(P)-binding Rossmann-like Domain"/>
    <property type="match status" value="1"/>
</dbReference>
<dbReference type="InterPro" id="IPR036291">
    <property type="entry name" value="NAD(P)-bd_dom_sf"/>
</dbReference>
<dbReference type="SUPFAM" id="SSF51735">
    <property type="entry name" value="NAD(P)-binding Rossmann-fold domains"/>
    <property type="match status" value="1"/>
</dbReference>
<organism>
    <name type="scientific">Planomonospora venezuelensis</name>
    <dbReference type="NCBI Taxonomy" id="1999"/>
    <lineage>
        <taxon>Bacteria</taxon>
        <taxon>Bacillati</taxon>
        <taxon>Actinomycetota</taxon>
        <taxon>Actinomycetes</taxon>
        <taxon>Streptosporangiales</taxon>
        <taxon>Streptosporangiaceae</taxon>
        <taxon>Planomonospora</taxon>
    </lineage>
</organism>
<sequence length="24" mass="2475">AQTPVKVTVTGAAGQIGYALLFRI</sequence>
<proteinExistence type="evidence at protein level"/>
<evidence type="ECO:0000250" key="1"/>
<evidence type="ECO:0000255" key="2">
    <source>
        <dbReference type="PROSITE-ProRule" id="PRU10004"/>
    </source>
</evidence>
<evidence type="ECO:0000305" key="3"/>
<gene>
    <name type="primary">mdh</name>
</gene>
<protein>
    <recommendedName>
        <fullName>Malate dehydrogenase</fullName>
        <ecNumber>1.1.1.37</ecNumber>
    </recommendedName>
</protein>
<feature type="chain" id="PRO_0000113386" description="Malate dehydrogenase">
    <location>
        <begin position="1"/>
        <end position="24" status="greater than"/>
    </location>
</feature>
<feature type="binding site" evidence="1">
    <location>
        <begin position="11"/>
        <end position="17"/>
    </location>
    <ligand>
        <name>NAD(+)</name>
        <dbReference type="ChEBI" id="CHEBI:57540"/>
    </ligand>
</feature>
<feature type="non-terminal residue">
    <location>
        <position position="24"/>
    </location>
</feature>
<accession>P19981</accession>
<name>MDH_PLAVE</name>